<comment type="function">
    <text evidence="1">Inhibits RpoS proteolysis by regulating RssB activity, thereby increasing the stability of the sigma stress factor RpoS especially during phosphate starvation, but also in stationary phase and during nitrogen starvation. Its effect on RpoS stability is due to its interaction with RssB, which probably blocks the interaction of RssB with RpoS, and the consequent delivery of the RssB-RpoS complex to the ClpXP protein degradation pathway.</text>
</comment>
<comment type="subunit">
    <text evidence="1">Interacts with RssB.</text>
</comment>
<comment type="subcellular location">
    <subcellularLocation>
        <location evidence="1">Cytoplasm</location>
    </subcellularLocation>
</comment>
<comment type="similarity">
    <text evidence="1">Belongs to the IraP family.</text>
</comment>
<dbReference type="EMBL" id="CP000946">
    <property type="protein sequence ID" value="ACA78872.1"/>
    <property type="molecule type" value="Genomic_DNA"/>
</dbReference>
<dbReference type="RefSeq" id="WP_000792970.1">
    <property type="nucleotide sequence ID" value="NZ_MTFT01000010.1"/>
</dbReference>
<dbReference type="SMR" id="P0C7L4"/>
<dbReference type="GeneID" id="93777080"/>
<dbReference type="KEGG" id="ecl:EcolC_3250"/>
<dbReference type="HOGENOM" id="CLU_169517_0_0_6"/>
<dbReference type="GO" id="GO:0005737">
    <property type="term" value="C:cytoplasm"/>
    <property type="evidence" value="ECO:0007669"/>
    <property type="project" value="UniProtKB-SubCell"/>
</dbReference>
<dbReference type="GO" id="GO:0009267">
    <property type="term" value="P:cellular response to starvation"/>
    <property type="evidence" value="ECO:0007669"/>
    <property type="project" value="UniProtKB-UniRule"/>
</dbReference>
<dbReference type="HAMAP" id="MF_01198">
    <property type="entry name" value="Anti_adapt_IraP"/>
    <property type="match status" value="1"/>
</dbReference>
<dbReference type="InterPro" id="IPR019732">
    <property type="entry name" value="SigmaS_Anti-adapt_IraP"/>
</dbReference>
<dbReference type="NCBIfam" id="NF007598">
    <property type="entry name" value="PRK10244.1"/>
    <property type="match status" value="1"/>
</dbReference>
<dbReference type="Pfam" id="PF10796">
    <property type="entry name" value="Anti-adapt_IraP"/>
    <property type="match status" value="1"/>
</dbReference>
<feature type="chain" id="PRO_0000337850" description="Anti-adapter protein IraP">
    <location>
        <begin position="1"/>
        <end position="86"/>
    </location>
</feature>
<feature type="coiled-coil region" evidence="1">
    <location>
        <begin position="1"/>
        <end position="36"/>
    </location>
</feature>
<protein>
    <recommendedName>
        <fullName evidence="1">Anti-adapter protein IraP</fullName>
    </recommendedName>
</protein>
<sequence>MKNLIAELLFKLAQKEEESKELCAQVEALEIIVTAMLRNMAQNDQQRLIDQVEGALYEVKPDASIPDDDTELLRDYVKKLLKHPRQ</sequence>
<gene>
    <name evidence="1" type="primary">iraP</name>
    <name type="ordered locus">EcolC_3250.1</name>
</gene>
<evidence type="ECO:0000255" key="1">
    <source>
        <dbReference type="HAMAP-Rule" id="MF_01198"/>
    </source>
</evidence>
<reference key="1">
    <citation type="submission" date="2008-02" db="EMBL/GenBank/DDBJ databases">
        <title>Complete sequence of Escherichia coli C str. ATCC 8739.</title>
        <authorList>
            <person name="Copeland A."/>
            <person name="Lucas S."/>
            <person name="Lapidus A."/>
            <person name="Glavina del Rio T."/>
            <person name="Dalin E."/>
            <person name="Tice H."/>
            <person name="Bruce D."/>
            <person name="Goodwin L."/>
            <person name="Pitluck S."/>
            <person name="Kiss H."/>
            <person name="Brettin T."/>
            <person name="Detter J.C."/>
            <person name="Han C."/>
            <person name="Kuske C.R."/>
            <person name="Schmutz J."/>
            <person name="Larimer F."/>
            <person name="Land M."/>
            <person name="Hauser L."/>
            <person name="Kyrpides N."/>
            <person name="Mikhailova N."/>
            <person name="Ingram L."/>
            <person name="Richardson P."/>
        </authorList>
    </citation>
    <scope>NUCLEOTIDE SEQUENCE [LARGE SCALE GENOMIC DNA]</scope>
    <source>
        <strain>ATCC 8739 / DSM 1576 / NBRC 3972 / NCIMB 8545 / WDCM 00012 / Crooks</strain>
    </source>
</reference>
<name>IRAP_ECOLC</name>
<organism>
    <name type="scientific">Escherichia coli (strain ATCC 8739 / DSM 1576 / NBRC 3972 / NCIMB 8545 / WDCM 00012 / Crooks)</name>
    <dbReference type="NCBI Taxonomy" id="481805"/>
    <lineage>
        <taxon>Bacteria</taxon>
        <taxon>Pseudomonadati</taxon>
        <taxon>Pseudomonadota</taxon>
        <taxon>Gammaproteobacteria</taxon>
        <taxon>Enterobacterales</taxon>
        <taxon>Enterobacteriaceae</taxon>
        <taxon>Escherichia</taxon>
    </lineage>
</organism>
<accession>P0C7L4</accession>
<accession>B1J066</accession>
<proteinExistence type="inferred from homology"/>
<keyword id="KW-0175">Coiled coil</keyword>
<keyword id="KW-0963">Cytoplasm</keyword>
<keyword id="KW-0346">Stress response</keyword>